<name>LPXK_ECO27</name>
<gene>
    <name evidence="1" type="primary">lpxK</name>
    <name type="ordered locus">E2348C_0908</name>
</gene>
<evidence type="ECO:0000255" key="1">
    <source>
        <dbReference type="HAMAP-Rule" id="MF_00409"/>
    </source>
</evidence>
<sequence>MIEKIWSGESPLWRLLLPLSWLYGLVSGAIRLCYKLKLKRAWRAPVPVVVVGNLTAGGNGKTPVVVWLVEQLQQRGIRVGVVSRGYGGKAESYPLLLSADTTTAQAGDEPVLIYQRTGAPVAVSPVRSDAVKAILAQHPDVQIIVTDDGLQHYRLARDVEIVVIDGVRRFGNGWWLPAGSMRERAGRLKSVDAVIVNGGVPRSGEIPMHLLPGQAVNLRTGTRCDVAQLEHVVAIAGIGHPPRFFATLKMCGVQPEKCVPLADHQSLNHADVSALVSAGQTLVMTEKDAVKCRAFAEENWWYLPVDAQLSGDEPAKLLAQLTSLASGH</sequence>
<feature type="chain" id="PRO_1000134738" description="Tetraacyldisaccharide 4'-kinase">
    <location>
        <begin position="1"/>
        <end position="328"/>
    </location>
</feature>
<feature type="binding site" evidence="1">
    <location>
        <begin position="55"/>
        <end position="62"/>
    </location>
    <ligand>
        <name>ATP</name>
        <dbReference type="ChEBI" id="CHEBI:30616"/>
    </ligand>
</feature>
<protein>
    <recommendedName>
        <fullName evidence="1">Tetraacyldisaccharide 4'-kinase</fullName>
        <ecNumber evidence="1">2.7.1.130</ecNumber>
    </recommendedName>
    <alternativeName>
        <fullName evidence="1">Lipid A 4'-kinase</fullName>
    </alternativeName>
</protein>
<comment type="function">
    <text evidence="1">Transfers the gamma-phosphate of ATP to the 4'-position of a tetraacyldisaccharide 1-phosphate intermediate (termed DS-1-P) to form tetraacyldisaccharide 1,4'-bis-phosphate (lipid IVA).</text>
</comment>
<comment type="catalytic activity">
    <reaction evidence="1">
        <text>a lipid A disaccharide + ATP = a lipid IVA + ADP + H(+)</text>
        <dbReference type="Rhea" id="RHEA:67840"/>
        <dbReference type="ChEBI" id="CHEBI:15378"/>
        <dbReference type="ChEBI" id="CHEBI:30616"/>
        <dbReference type="ChEBI" id="CHEBI:176343"/>
        <dbReference type="ChEBI" id="CHEBI:176425"/>
        <dbReference type="ChEBI" id="CHEBI:456216"/>
        <dbReference type="EC" id="2.7.1.130"/>
    </reaction>
</comment>
<comment type="pathway">
    <text evidence="1">Glycolipid biosynthesis; lipid IV(A) biosynthesis; lipid IV(A) from (3R)-3-hydroxytetradecanoyl-[acyl-carrier-protein] and UDP-N-acetyl-alpha-D-glucosamine: step 6/6.</text>
</comment>
<comment type="similarity">
    <text evidence="1">Belongs to the LpxK family.</text>
</comment>
<organism>
    <name type="scientific">Escherichia coli O127:H6 (strain E2348/69 / EPEC)</name>
    <dbReference type="NCBI Taxonomy" id="574521"/>
    <lineage>
        <taxon>Bacteria</taxon>
        <taxon>Pseudomonadati</taxon>
        <taxon>Pseudomonadota</taxon>
        <taxon>Gammaproteobacteria</taxon>
        <taxon>Enterobacterales</taxon>
        <taxon>Enterobacteriaceae</taxon>
        <taxon>Escherichia</taxon>
    </lineage>
</organism>
<dbReference type="EC" id="2.7.1.130" evidence="1"/>
<dbReference type="EMBL" id="FM180568">
    <property type="protein sequence ID" value="CAS08456.1"/>
    <property type="molecule type" value="Genomic_DNA"/>
</dbReference>
<dbReference type="RefSeq" id="WP_000570553.1">
    <property type="nucleotide sequence ID" value="NC_011601.1"/>
</dbReference>
<dbReference type="SMR" id="B7UN01"/>
<dbReference type="KEGG" id="ecg:E2348C_0908"/>
<dbReference type="HOGENOM" id="CLU_038816_2_0_6"/>
<dbReference type="UniPathway" id="UPA00359">
    <property type="reaction ID" value="UER00482"/>
</dbReference>
<dbReference type="Proteomes" id="UP000008205">
    <property type="component" value="Chromosome"/>
</dbReference>
<dbReference type="GO" id="GO:0005886">
    <property type="term" value="C:plasma membrane"/>
    <property type="evidence" value="ECO:0007669"/>
    <property type="project" value="TreeGrafter"/>
</dbReference>
<dbReference type="GO" id="GO:0005524">
    <property type="term" value="F:ATP binding"/>
    <property type="evidence" value="ECO:0007669"/>
    <property type="project" value="UniProtKB-UniRule"/>
</dbReference>
<dbReference type="GO" id="GO:0009029">
    <property type="term" value="F:tetraacyldisaccharide 4'-kinase activity"/>
    <property type="evidence" value="ECO:0007669"/>
    <property type="project" value="UniProtKB-UniRule"/>
</dbReference>
<dbReference type="GO" id="GO:0009245">
    <property type="term" value="P:lipid A biosynthetic process"/>
    <property type="evidence" value="ECO:0007669"/>
    <property type="project" value="UniProtKB-UniRule"/>
</dbReference>
<dbReference type="GO" id="GO:0009244">
    <property type="term" value="P:lipopolysaccharide core region biosynthetic process"/>
    <property type="evidence" value="ECO:0007669"/>
    <property type="project" value="TreeGrafter"/>
</dbReference>
<dbReference type="HAMAP" id="MF_00409">
    <property type="entry name" value="LpxK"/>
    <property type="match status" value="1"/>
</dbReference>
<dbReference type="InterPro" id="IPR003758">
    <property type="entry name" value="LpxK"/>
</dbReference>
<dbReference type="InterPro" id="IPR027417">
    <property type="entry name" value="P-loop_NTPase"/>
</dbReference>
<dbReference type="NCBIfam" id="TIGR00682">
    <property type="entry name" value="lpxK"/>
    <property type="match status" value="1"/>
</dbReference>
<dbReference type="PANTHER" id="PTHR42724">
    <property type="entry name" value="TETRAACYLDISACCHARIDE 4'-KINASE"/>
    <property type="match status" value="1"/>
</dbReference>
<dbReference type="PANTHER" id="PTHR42724:SF1">
    <property type="entry name" value="TETRAACYLDISACCHARIDE 4'-KINASE, MITOCHONDRIAL-RELATED"/>
    <property type="match status" value="1"/>
</dbReference>
<dbReference type="Pfam" id="PF02606">
    <property type="entry name" value="LpxK"/>
    <property type="match status" value="1"/>
</dbReference>
<dbReference type="SUPFAM" id="SSF52540">
    <property type="entry name" value="P-loop containing nucleoside triphosphate hydrolases"/>
    <property type="match status" value="1"/>
</dbReference>
<keyword id="KW-0067">ATP-binding</keyword>
<keyword id="KW-0418">Kinase</keyword>
<keyword id="KW-0441">Lipid A biosynthesis</keyword>
<keyword id="KW-0444">Lipid biosynthesis</keyword>
<keyword id="KW-0443">Lipid metabolism</keyword>
<keyword id="KW-0547">Nucleotide-binding</keyword>
<keyword id="KW-1185">Reference proteome</keyword>
<keyword id="KW-0808">Transferase</keyword>
<proteinExistence type="inferred from homology"/>
<reference key="1">
    <citation type="journal article" date="2009" name="J. Bacteriol.">
        <title>Complete genome sequence and comparative genome analysis of enteropathogenic Escherichia coli O127:H6 strain E2348/69.</title>
        <authorList>
            <person name="Iguchi A."/>
            <person name="Thomson N.R."/>
            <person name="Ogura Y."/>
            <person name="Saunders D."/>
            <person name="Ooka T."/>
            <person name="Henderson I.R."/>
            <person name="Harris D."/>
            <person name="Asadulghani M."/>
            <person name="Kurokawa K."/>
            <person name="Dean P."/>
            <person name="Kenny B."/>
            <person name="Quail M.A."/>
            <person name="Thurston S."/>
            <person name="Dougan G."/>
            <person name="Hayashi T."/>
            <person name="Parkhill J."/>
            <person name="Frankel G."/>
        </authorList>
    </citation>
    <scope>NUCLEOTIDE SEQUENCE [LARGE SCALE GENOMIC DNA]</scope>
    <source>
        <strain>E2348/69 / EPEC</strain>
    </source>
</reference>
<accession>B7UN01</accession>